<feature type="transit peptide" description="Chloroplast" evidence="2">
    <location>
        <begin position="1"/>
        <end position="44"/>
    </location>
</feature>
<feature type="chain" id="PRO_0000307181" description="Diaminopimelate epimerase, chloroplastic">
    <location>
        <begin position="45"/>
        <end position="354"/>
    </location>
</feature>
<feature type="active site" evidence="1">
    <location>
        <position position="142"/>
    </location>
</feature>
<feature type="active site" evidence="1">
    <location>
        <position position="297"/>
    </location>
</feature>
<protein>
    <recommendedName>
        <fullName>Diaminopimelate epimerase, chloroplastic</fullName>
        <shortName>DAP epimerase</shortName>
        <ecNumber>5.1.1.7</ecNumber>
    </recommendedName>
</protein>
<name>DAPF_ORYSJ</name>
<evidence type="ECO:0000250" key="1"/>
<evidence type="ECO:0000255" key="2"/>
<evidence type="ECO:0000305" key="3"/>
<comment type="catalytic activity">
    <reaction>
        <text>(2S,6S)-2,6-diaminopimelate = meso-2,6-diaminopimelate</text>
        <dbReference type="Rhea" id="RHEA:15393"/>
        <dbReference type="ChEBI" id="CHEBI:57609"/>
        <dbReference type="ChEBI" id="CHEBI:57791"/>
        <dbReference type="EC" id="5.1.1.7"/>
    </reaction>
</comment>
<comment type="pathway">
    <text>Amino-acid biosynthesis; L-lysine biosynthesis via DAP pathway; DL-2,6-diaminopimelate from LL-2,6-diaminopimelate: step 1/1.</text>
</comment>
<comment type="subcellular location">
    <subcellularLocation>
        <location evidence="3">Plastid</location>
        <location evidence="3">Chloroplast</location>
    </subcellularLocation>
</comment>
<comment type="similarity">
    <text evidence="3">Belongs to the diaminopimelate epimerase family.</text>
</comment>
<comment type="sequence caution" evidence="3">
    <conflict type="erroneous gene model prediction">
        <sequence resource="EMBL-CDS" id="BAF30079"/>
    </conflict>
</comment>
<organism>
    <name type="scientific">Oryza sativa subsp. japonica</name>
    <name type="common">Rice</name>
    <dbReference type="NCBI Taxonomy" id="39947"/>
    <lineage>
        <taxon>Eukaryota</taxon>
        <taxon>Viridiplantae</taxon>
        <taxon>Streptophyta</taxon>
        <taxon>Embryophyta</taxon>
        <taxon>Tracheophyta</taxon>
        <taxon>Spermatophyta</taxon>
        <taxon>Magnoliopsida</taxon>
        <taxon>Liliopsida</taxon>
        <taxon>Poales</taxon>
        <taxon>Poaceae</taxon>
        <taxon>BOP clade</taxon>
        <taxon>Oryzoideae</taxon>
        <taxon>Oryzeae</taxon>
        <taxon>Oryzinae</taxon>
        <taxon>Oryza</taxon>
        <taxon>Oryza sativa</taxon>
    </lineage>
</organism>
<dbReference type="EC" id="5.1.1.7"/>
<dbReference type="EMBL" id="DP000011">
    <property type="protein sequence ID" value="ABA99594.1"/>
    <property type="molecule type" value="Genomic_DNA"/>
</dbReference>
<dbReference type="EMBL" id="AP008218">
    <property type="protein sequence ID" value="BAF30079.2"/>
    <property type="status" value="ALT_SEQ"/>
    <property type="molecule type" value="Genomic_DNA"/>
</dbReference>
<dbReference type="EMBL" id="AP014968">
    <property type="status" value="NOT_ANNOTATED_CDS"/>
    <property type="molecule type" value="Genomic_DNA"/>
</dbReference>
<dbReference type="EMBL" id="CM000149">
    <property type="protein sequence ID" value="EAZ20906.1"/>
    <property type="molecule type" value="Genomic_DNA"/>
</dbReference>
<dbReference type="EMBL" id="AK242455">
    <property type="status" value="NOT_ANNOTATED_CDS"/>
    <property type="molecule type" value="mRNA"/>
</dbReference>
<dbReference type="RefSeq" id="XP_015620224.1">
    <property type="nucleotide sequence ID" value="XM_015764738.1"/>
</dbReference>
<dbReference type="RefSeq" id="XP_015620225.1">
    <property type="nucleotide sequence ID" value="XM_015764739.1"/>
</dbReference>
<dbReference type="SMR" id="Q2QNF7"/>
<dbReference type="FunCoup" id="Q2QNF7">
    <property type="interactions" value="792"/>
</dbReference>
<dbReference type="STRING" id="39947.Q2QNF7"/>
<dbReference type="PaxDb" id="39947-Q2QNF7"/>
<dbReference type="KEGG" id="dosa:Os12g0567200"/>
<dbReference type="InParanoid" id="Q2QNF7"/>
<dbReference type="OrthoDB" id="4768at2759"/>
<dbReference type="PlantReactome" id="R-OSA-1119273">
    <property type="pathway name" value="Lysine biosynthesis I"/>
</dbReference>
<dbReference type="PlantReactome" id="R-OSA-1119283">
    <property type="pathway name" value="Lysine biosynthesis II"/>
</dbReference>
<dbReference type="PlantReactome" id="R-OSA-1119419">
    <property type="pathway name" value="Lysine biosynthesis VI"/>
</dbReference>
<dbReference type="UniPathway" id="UPA00034">
    <property type="reaction ID" value="UER00025"/>
</dbReference>
<dbReference type="Proteomes" id="UP000000763">
    <property type="component" value="Chromosome 12"/>
</dbReference>
<dbReference type="Proteomes" id="UP000007752">
    <property type="component" value="Chromosome 12"/>
</dbReference>
<dbReference type="Proteomes" id="UP000059680">
    <property type="component" value="Chromosome 12"/>
</dbReference>
<dbReference type="GO" id="GO:0009507">
    <property type="term" value="C:chloroplast"/>
    <property type="evidence" value="ECO:0007669"/>
    <property type="project" value="UniProtKB-SubCell"/>
</dbReference>
<dbReference type="GO" id="GO:0005829">
    <property type="term" value="C:cytosol"/>
    <property type="evidence" value="ECO:0000318"/>
    <property type="project" value="GO_Central"/>
</dbReference>
<dbReference type="GO" id="GO:0008837">
    <property type="term" value="F:diaminopimelate epimerase activity"/>
    <property type="evidence" value="ECO:0000318"/>
    <property type="project" value="GO_Central"/>
</dbReference>
<dbReference type="GO" id="GO:0009089">
    <property type="term" value="P:lysine biosynthetic process via diaminopimelate"/>
    <property type="evidence" value="ECO:0000318"/>
    <property type="project" value="GO_Central"/>
</dbReference>
<dbReference type="FunFam" id="3.10.310.10:FF:000009">
    <property type="entry name" value="Diaminopimelate epimerase chloroplastic"/>
    <property type="match status" value="1"/>
</dbReference>
<dbReference type="FunFam" id="3.10.310.10:FF:000011">
    <property type="entry name" value="Diaminopimelate epimerase, chloroplastic"/>
    <property type="match status" value="1"/>
</dbReference>
<dbReference type="Gene3D" id="3.10.310.10">
    <property type="entry name" value="Diaminopimelate Epimerase, Chain A, domain 1"/>
    <property type="match status" value="2"/>
</dbReference>
<dbReference type="HAMAP" id="MF_00197">
    <property type="entry name" value="DAP_epimerase"/>
    <property type="match status" value="1"/>
</dbReference>
<dbReference type="InterPro" id="IPR018510">
    <property type="entry name" value="DAP_epimerase_AS"/>
</dbReference>
<dbReference type="InterPro" id="IPR001653">
    <property type="entry name" value="DAP_epimerase_DapF"/>
</dbReference>
<dbReference type="NCBIfam" id="TIGR00652">
    <property type="entry name" value="DapF"/>
    <property type="match status" value="1"/>
</dbReference>
<dbReference type="PANTHER" id="PTHR31689:SF0">
    <property type="entry name" value="DIAMINOPIMELATE EPIMERASE"/>
    <property type="match status" value="1"/>
</dbReference>
<dbReference type="PANTHER" id="PTHR31689">
    <property type="entry name" value="DIAMINOPIMELATE EPIMERASE, CHLOROPLASTIC"/>
    <property type="match status" value="1"/>
</dbReference>
<dbReference type="Pfam" id="PF01678">
    <property type="entry name" value="DAP_epimerase"/>
    <property type="match status" value="2"/>
</dbReference>
<dbReference type="SUPFAM" id="SSF54506">
    <property type="entry name" value="Diaminopimelate epimerase-like"/>
    <property type="match status" value="2"/>
</dbReference>
<dbReference type="PROSITE" id="PS01326">
    <property type="entry name" value="DAP_EPIMERASE"/>
    <property type="match status" value="1"/>
</dbReference>
<accession>Q2QNF7</accession>
<proteinExistence type="evidence at transcript level"/>
<sequence length="354" mass="37830">MSSATAAATATIAAAAAKLAATPAPAPSRRRLTLRGNPTARRCVAAMAVSTPRSAAAAAFLERRESERALHFVKYQGLGNDFIMVDNRDSAVPKVTPEEAAKLCDRNFGVGADGVIFVMPGVNGADYTMRIFNSDGSEPEMCGNGVRCFARFIAELENLQGTHSFKIHTGAGLIIPEIQNDGKVKVDMGQPILSGPDIPTKLPSTKNEAVVQADLAVDGSTWQVTCVSMGNPHCVTFGTKELKVLHVDDLKLSDIGPKFEHHEMFPARTNTEFVEVLSRSHLKMRVWERGAGATLACGTGACAVVVAAVLEGRAERKCVVDLPGGPLEIEWREDDNHIYMTGPAEAVFYGSAVH</sequence>
<keyword id="KW-0028">Amino-acid biosynthesis</keyword>
<keyword id="KW-0150">Chloroplast</keyword>
<keyword id="KW-0413">Isomerase</keyword>
<keyword id="KW-0457">Lysine biosynthesis</keyword>
<keyword id="KW-0934">Plastid</keyword>
<keyword id="KW-1185">Reference proteome</keyword>
<keyword id="KW-0809">Transit peptide</keyword>
<reference key="1">
    <citation type="journal article" date="2005" name="BMC Biol.">
        <title>The sequence of rice chromosomes 11 and 12, rich in disease resistance genes and recent gene duplications.</title>
        <authorList>
            <consortium name="The rice chromosomes 11 and 12 sequencing consortia"/>
        </authorList>
    </citation>
    <scope>NUCLEOTIDE SEQUENCE [LARGE SCALE GENOMIC DNA]</scope>
    <source>
        <strain>cv. Nipponbare</strain>
    </source>
</reference>
<reference key="2">
    <citation type="journal article" date="2005" name="Nature">
        <title>The map-based sequence of the rice genome.</title>
        <authorList>
            <consortium name="International rice genome sequencing project (IRGSP)"/>
        </authorList>
    </citation>
    <scope>NUCLEOTIDE SEQUENCE [LARGE SCALE GENOMIC DNA]</scope>
    <source>
        <strain>cv. Nipponbare</strain>
    </source>
</reference>
<reference key="3">
    <citation type="journal article" date="2008" name="Nucleic Acids Res.">
        <title>The rice annotation project database (RAP-DB): 2008 update.</title>
        <authorList>
            <consortium name="The rice annotation project (RAP)"/>
        </authorList>
    </citation>
    <scope>GENOME REANNOTATION</scope>
    <source>
        <strain>cv. Nipponbare</strain>
    </source>
</reference>
<reference key="4">
    <citation type="journal article" date="2013" name="Rice">
        <title>Improvement of the Oryza sativa Nipponbare reference genome using next generation sequence and optical map data.</title>
        <authorList>
            <person name="Kawahara Y."/>
            <person name="de la Bastide M."/>
            <person name="Hamilton J.P."/>
            <person name="Kanamori H."/>
            <person name="McCombie W.R."/>
            <person name="Ouyang S."/>
            <person name="Schwartz D.C."/>
            <person name="Tanaka T."/>
            <person name="Wu J."/>
            <person name="Zhou S."/>
            <person name="Childs K.L."/>
            <person name="Davidson R.M."/>
            <person name="Lin H."/>
            <person name="Quesada-Ocampo L."/>
            <person name="Vaillancourt B."/>
            <person name="Sakai H."/>
            <person name="Lee S.S."/>
            <person name="Kim J."/>
            <person name="Numa H."/>
            <person name="Itoh T."/>
            <person name="Buell C.R."/>
            <person name="Matsumoto T."/>
        </authorList>
    </citation>
    <scope>GENOME REANNOTATION</scope>
    <source>
        <strain>cv. Nipponbare</strain>
    </source>
</reference>
<reference key="5">
    <citation type="journal article" date="2005" name="PLoS Biol.">
        <title>The genomes of Oryza sativa: a history of duplications.</title>
        <authorList>
            <person name="Yu J."/>
            <person name="Wang J."/>
            <person name="Lin W."/>
            <person name="Li S."/>
            <person name="Li H."/>
            <person name="Zhou J."/>
            <person name="Ni P."/>
            <person name="Dong W."/>
            <person name="Hu S."/>
            <person name="Zeng C."/>
            <person name="Zhang J."/>
            <person name="Zhang Y."/>
            <person name="Li R."/>
            <person name="Xu Z."/>
            <person name="Li S."/>
            <person name="Li X."/>
            <person name="Zheng H."/>
            <person name="Cong L."/>
            <person name="Lin L."/>
            <person name="Yin J."/>
            <person name="Geng J."/>
            <person name="Li G."/>
            <person name="Shi J."/>
            <person name="Liu J."/>
            <person name="Lv H."/>
            <person name="Li J."/>
            <person name="Wang J."/>
            <person name="Deng Y."/>
            <person name="Ran L."/>
            <person name="Shi X."/>
            <person name="Wang X."/>
            <person name="Wu Q."/>
            <person name="Li C."/>
            <person name="Ren X."/>
            <person name="Wang J."/>
            <person name="Wang X."/>
            <person name="Li D."/>
            <person name="Liu D."/>
            <person name="Zhang X."/>
            <person name="Ji Z."/>
            <person name="Zhao W."/>
            <person name="Sun Y."/>
            <person name="Zhang Z."/>
            <person name="Bao J."/>
            <person name="Han Y."/>
            <person name="Dong L."/>
            <person name="Ji J."/>
            <person name="Chen P."/>
            <person name="Wu S."/>
            <person name="Liu J."/>
            <person name="Xiao Y."/>
            <person name="Bu D."/>
            <person name="Tan J."/>
            <person name="Yang L."/>
            <person name="Ye C."/>
            <person name="Zhang J."/>
            <person name="Xu J."/>
            <person name="Zhou Y."/>
            <person name="Yu Y."/>
            <person name="Zhang B."/>
            <person name="Zhuang S."/>
            <person name="Wei H."/>
            <person name="Liu B."/>
            <person name="Lei M."/>
            <person name="Yu H."/>
            <person name="Li Y."/>
            <person name="Xu H."/>
            <person name="Wei S."/>
            <person name="He X."/>
            <person name="Fang L."/>
            <person name="Zhang Z."/>
            <person name="Zhang Y."/>
            <person name="Huang X."/>
            <person name="Su Z."/>
            <person name="Tong W."/>
            <person name="Li J."/>
            <person name="Tong Z."/>
            <person name="Li S."/>
            <person name="Ye J."/>
            <person name="Wang L."/>
            <person name="Fang L."/>
            <person name="Lei T."/>
            <person name="Chen C.-S."/>
            <person name="Chen H.-C."/>
            <person name="Xu Z."/>
            <person name="Li H."/>
            <person name="Huang H."/>
            <person name="Zhang F."/>
            <person name="Xu H."/>
            <person name="Li N."/>
            <person name="Zhao C."/>
            <person name="Li S."/>
            <person name="Dong L."/>
            <person name="Huang Y."/>
            <person name="Li L."/>
            <person name="Xi Y."/>
            <person name="Qi Q."/>
            <person name="Li W."/>
            <person name="Zhang B."/>
            <person name="Hu W."/>
            <person name="Zhang Y."/>
            <person name="Tian X."/>
            <person name="Jiao Y."/>
            <person name="Liang X."/>
            <person name="Jin J."/>
            <person name="Gao L."/>
            <person name="Zheng W."/>
            <person name="Hao B."/>
            <person name="Liu S.-M."/>
            <person name="Wang W."/>
            <person name="Yuan L."/>
            <person name="Cao M."/>
            <person name="McDermott J."/>
            <person name="Samudrala R."/>
            <person name="Wang J."/>
            <person name="Wong G.K.-S."/>
            <person name="Yang H."/>
        </authorList>
    </citation>
    <scope>NUCLEOTIDE SEQUENCE [LARGE SCALE GENOMIC DNA]</scope>
    <source>
        <strain>cv. Nipponbare</strain>
    </source>
</reference>
<reference key="6">
    <citation type="submission" date="2006-10" db="EMBL/GenBank/DDBJ databases">
        <title>Oryza sativa full length cDNA.</title>
        <authorList>
            <consortium name="The rice full-length cDNA consortium"/>
        </authorList>
    </citation>
    <scope>NUCLEOTIDE SEQUENCE [LARGE SCALE MRNA] OF 340-354</scope>
    <source>
        <strain>cv. Nipponbare</strain>
    </source>
</reference>
<gene>
    <name type="primary">DAPF</name>
    <name type="ordered locus">Os12g0567200</name>
    <name type="ordered locus">LOC_Os12g37960</name>
    <name type="ORF">OsJ_035115</name>
</gene>